<feature type="chain" id="PRO_0000093892" description="RNA polymerase sigma factor SigA">
    <location>
        <begin position="1"/>
        <end position="386"/>
    </location>
</feature>
<feature type="DNA-binding region" description="H-T-H motif" evidence="1">
    <location>
        <begin position="348"/>
        <end position="367"/>
    </location>
</feature>
<feature type="region of interest" description="Sigma-70 factor domain-2" evidence="1">
    <location>
        <begin position="154"/>
        <end position="224"/>
    </location>
</feature>
<feature type="region of interest" description="Sigma-70 factor domain-3" evidence="1">
    <location>
        <begin position="233"/>
        <end position="309"/>
    </location>
</feature>
<feature type="region of interest" description="Sigma-70 factor domain-4" evidence="1">
    <location>
        <begin position="322"/>
        <end position="375"/>
    </location>
</feature>
<feature type="short sequence motif" description="Interaction with polymerase core subunit RpoC">
    <location>
        <begin position="178"/>
        <end position="181"/>
    </location>
</feature>
<protein>
    <recommendedName>
        <fullName evidence="1">RNA polymerase sigma factor SigA</fullName>
    </recommendedName>
    <alternativeName>
        <fullName>Sigma-42</fullName>
    </alternativeName>
</protein>
<comment type="function">
    <text evidence="1">Sigma factors are initiation factors that promote the attachment of RNA polymerase to specific initiation sites and are then released. This sigma factor is the primary sigma factor during exponential growth.</text>
</comment>
<comment type="subunit">
    <text evidence="1">Interacts transiently with the RNA polymerase catalytic core.</text>
</comment>
<comment type="subcellular location">
    <subcellularLocation>
        <location evidence="1">Cytoplasm</location>
    </subcellularLocation>
</comment>
<comment type="similarity">
    <text evidence="1">Belongs to the sigma-70 factor family. RpoD/SigA subfamily.</text>
</comment>
<comment type="sequence caution" evidence="2">
    <conflict type="erroneous initiation">
        <sequence resource="EMBL-CDS" id="AAK04651"/>
    </conflict>
</comment>
<comment type="sequence caution" evidence="2">
    <conflict type="erroneous initiation">
        <sequence resource="EMBL-CDS" id="BAA01038"/>
    </conflict>
</comment>
<proteinExistence type="inferred from homology"/>
<accession>Q04506</accession>
<accession>P52330</accession>
<accession>Q9CI13</accession>
<dbReference type="EMBL" id="D10168">
    <property type="protein sequence ID" value="BAA01038.1"/>
    <property type="status" value="ALT_INIT"/>
    <property type="molecule type" value="Genomic_DNA"/>
</dbReference>
<dbReference type="EMBL" id="AE005176">
    <property type="protein sequence ID" value="AAK04651.1"/>
    <property type="status" value="ALT_INIT"/>
    <property type="molecule type" value="Genomic_DNA"/>
</dbReference>
<dbReference type="PIR" id="A86694">
    <property type="entry name" value="A86694"/>
</dbReference>
<dbReference type="PIR" id="JC1397">
    <property type="entry name" value="JC1397"/>
</dbReference>
<dbReference type="RefSeq" id="NP_266709.1">
    <property type="nucleotide sequence ID" value="NC_002662.1"/>
</dbReference>
<dbReference type="SMR" id="Q04506"/>
<dbReference type="PaxDb" id="272623-L0139"/>
<dbReference type="EnsemblBacteria" id="AAK04651">
    <property type="protein sequence ID" value="AAK04651"/>
    <property type="gene ID" value="L0139"/>
</dbReference>
<dbReference type="KEGG" id="lla:L0139"/>
<dbReference type="PATRIC" id="fig|272623.7.peg.591"/>
<dbReference type="eggNOG" id="COG0568">
    <property type="taxonomic scope" value="Bacteria"/>
</dbReference>
<dbReference type="HOGENOM" id="CLU_014793_3_3_9"/>
<dbReference type="OrthoDB" id="9809557at2"/>
<dbReference type="Proteomes" id="UP000002196">
    <property type="component" value="Chromosome"/>
</dbReference>
<dbReference type="GO" id="GO:0005737">
    <property type="term" value="C:cytoplasm"/>
    <property type="evidence" value="ECO:0007669"/>
    <property type="project" value="UniProtKB-SubCell"/>
</dbReference>
<dbReference type="GO" id="GO:0003677">
    <property type="term" value="F:DNA binding"/>
    <property type="evidence" value="ECO:0007669"/>
    <property type="project" value="UniProtKB-UniRule"/>
</dbReference>
<dbReference type="GO" id="GO:0016987">
    <property type="term" value="F:sigma factor activity"/>
    <property type="evidence" value="ECO:0007669"/>
    <property type="project" value="UniProtKB-UniRule"/>
</dbReference>
<dbReference type="GO" id="GO:0006352">
    <property type="term" value="P:DNA-templated transcription initiation"/>
    <property type="evidence" value="ECO:0007669"/>
    <property type="project" value="UniProtKB-UniRule"/>
</dbReference>
<dbReference type="CDD" id="cd06171">
    <property type="entry name" value="Sigma70_r4"/>
    <property type="match status" value="1"/>
</dbReference>
<dbReference type="FunFam" id="1.10.10.10:FF:000002">
    <property type="entry name" value="RNA polymerase sigma factor SigA"/>
    <property type="match status" value="1"/>
</dbReference>
<dbReference type="FunFam" id="1.10.10.10:FF:000004">
    <property type="entry name" value="RNA polymerase sigma factor SigA"/>
    <property type="match status" value="1"/>
</dbReference>
<dbReference type="FunFam" id="1.10.601.10:FF:000001">
    <property type="entry name" value="RNA polymerase sigma factor SigA"/>
    <property type="match status" value="1"/>
</dbReference>
<dbReference type="Gene3D" id="1.20.120.1810">
    <property type="match status" value="1"/>
</dbReference>
<dbReference type="Gene3D" id="1.10.601.10">
    <property type="entry name" value="RNA Polymerase Primary Sigma Factor"/>
    <property type="match status" value="1"/>
</dbReference>
<dbReference type="Gene3D" id="1.10.10.10">
    <property type="entry name" value="Winged helix-like DNA-binding domain superfamily/Winged helix DNA-binding domain"/>
    <property type="match status" value="2"/>
</dbReference>
<dbReference type="HAMAP" id="MF_00963">
    <property type="entry name" value="Sigma70_RpoD_SigA"/>
    <property type="match status" value="1"/>
</dbReference>
<dbReference type="InterPro" id="IPR014284">
    <property type="entry name" value="RNA_pol_sigma-70_dom"/>
</dbReference>
<dbReference type="InterPro" id="IPR000943">
    <property type="entry name" value="RNA_pol_sigma70"/>
</dbReference>
<dbReference type="InterPro" id="IPR009042">
    <property type="entry name" value="RNA_pol_sigma70_r1_2"/>
</dbReference>
<dbReference type="InterPro" id="IPR007627">
    <property type="entry name" value="RNA_pol_sigma70_r2"/>
</dbReference>
<dbReference type="InterPro" id="IPR007624">
    <property type="entry name" value="RNA_pol_sigma70_r3"/>
</dbReference>
<dbReference type="InterPro" id="IPR007630">
    <property type="entry name" value="RNA_pol_sigma70_r4"/>
</dbReference>
<dbReference type="InterPro" id="IPR013325">
    <property type="entry name" value="RNA_pol_sigma_r2"/>
</dbReference>
<dbReference type="InterPro" id="IPR013324">
    <property type="entry name" value="RNA_pol_sigma_r3/r4-like"/>
</dbReference>
<dbReference type="InterPro" id="IPR012760">
    <property type="entry name" value="RNA_pol_sigma_RpoD_C"/>
</dbReference>
<dbReference type="InterPro" id="IPR050239">
    <property type="entry name" value="Sigma-70_RNA_pol_init_factors"/>
</dbReference>
<dbReference type="InterPro" id="IPR028630">
    <property type="entry name" value="Sigma70_RpoD"/>
</dbReference>
<dbReference type="InterPro" id="IPR036388">
    <property type="entry name" value="WH-like_DNA-bd_sf"/>
</dbReference>
<dbReference type="NCBIfam" id="NF006666">
    <property type="entry name" value="PRK09210.1"/>
    <property type="match status" value="1"/>
</dbReference>
<dbReference type="NCBIfam" id="TIGR02393">
    <property type="entry name" value="RpoD_Cterm"/>
    <property type="match status" value="1"/>
</dbReference>
<dbReference type="NCBIfam" id="TIGR02937">
    <property type="entry name" value="sigma70-ECF"/>
    <property type="match status" value="1"/>
</dbReference>
<dbReference type="PANTHER" id="PTHR30603">
    <property type="entry name" value="RNA POLYMERASE SIGMA FACTOR RPO"/>
    <property type="match status" value="1"/>
</dbReference>
<dbReference type="PANTHER" id="PTHR30603:SF60">
    <property type="entry name" value="RNA POLYMERASE SIGMA FACTOR RPOD"/>
    <property type="match status" value="1"/>
</dbReference>
<dbReference type="Pfam" id="PF00140">
    <property type="entry name" value="Sigma70_r1_2"/>
    <property type="match status" value="1"/>
</dbReference>
<dbReference type="Pfam" id="PF04542">
    <property type="entry name" value="Sigma70_r2"/>
    <property type="match status" value="1"/>
</dbReference>
<dbReference type="Pfam" id="PF04539">
    <property type="entry name" value="Sigma70_r3"/>
    <property type="match status" value="1"/>
</dbReference>
<dbReference type="Pfam" id="PF04545">
    <property type="entry name" value="Sigma70_r4"/>
    <property type="match status" value="1"/>
</dbReference>
<dbReference type="PRINTS" id="PR00046">
    <property type="entry name" value="SIGMA70FCT"/>
</dbReference>
<dbReference type="SUPFAM" id="SSF88946">
    <property type="entry name" value="Sigma2 domain of RNA polymerase sigma factors"/>
    <property type="match status" value="1"/>
</dbReference>
<dbReference type="SUPFAM" id="SSF88659">
    <property type="entry name" value="Sigma3 and sigma4 domains of RNA polymerase sigma factors"/>
    <property type="match status" value="2"/>
</dbReference>
<dbReference type="PROSITE" id="PS00715">
    <property type="entry name" value="SIGMA70_1"/>
    <property type="match status" value="1"/>
</dbReference>
<dbReference type="PROSITE" id="PS00716">
    <property type="entry name" value="SIGMA70_2"/>
    <property type="match status" value="1"/>
</dbReference>
<name>SIGA_LACLA</name>
<sequence>MDSPKTLARVEVKENGDTFNVKAYEKAVKSYITKRKPLGEALDEEIMDELSVKFGIVDDALEDLFKQIQDAGISIVDKDGNPSPLALVTDEIEKEEVSDTAMDEIVTNVRIDDPVRMYLKEIGRYPLISLDEETKLAEAIIAGGEGAEFAKQMLAEANLRLVVSIAKRYSGRGMQFLDLIQEGNMGLMKAVDKFDHTKGFKFSTYATWWIRQAITRAIADQARTIRIPVHMVETINKLIRVQRNLLQELGRDPSPEEIGKELHMAPDKVREVLKIAQEPVSLETPIGEEDDSHLGDFIEDDVIESPVDYTNRILLREQLDEVMDTLTDREENVLRMRFGLDDGRMHTLEDVGKQFKVTRERIRQIEAKAIKKLRHPRRSKPLRDFM</sequence>
<reference key="1">
    <citation type="journal article" date="1993" name="Biosci. Biotechnol. Biochem.">
        <title>Genetic and molecular analysis of the rpoD gene from Lactococcus lactis.</title>
        <authorList>
            <person name="Araya T."/>
            <person name="Ishibashi N."/>
            <person name="Shimamura S."/>
            <person name="Tanaka K."/>
            <person name="Takahashi H."/>
        </authorList>
    </citation>
    <scope>NUCLEOTIDE SEQUENCE [GENOMIC DNA]</scope>
    <source>
        <strain>ATCC 19435 / DSM 20481 / NCDO 604 / NCIB 6681 / NCTC 6681</strain>
    </source>
</reference>
<reference key="2">
    <citation type="journal article" date="2001" name="Genome Res.">
        <title>The complete genome sequence of the lactic acid bacterium Lactococcus lactis ssp. lactis IL1403.</title>
        <authorList>
            <person name="Bolotin A."/>
            <person name="Wincker P."/>
            <person name="Mauger S."/>
            <person name="Jaillon O."/>
            <person name="Malarme K."/>
            <person name="Weissenbach J."/>
            <person name="Ehrlich S.D."/>
            <person name="Sorokin A."/>
        </authorList>
    </citation>
    <scope>NUCLEOTIDE SEQUENCE [LARGE SCALE GENOMIC DNA]</scope>
    <source>
        <strain>IL1403</strain>
    </source>
</reference>
<keyword id="KW-0963">Cytoplasm</keyword>
<keyword id="KW-0238">DNA-binding</keyword>
<keyword id="KW-1185">Reference proteome</keyword>
<keyword id="KW-0731">Sigma factor</keyword>
<keyword id="KW-0804">Transcription</keyword>
<keyword id="KW-0805">Transcription regulation</keyword>
<evidence type="ECO:0000255" key="1">
    <source>
        <dbReference type="HAMAP-Rule" id="MF_00963"/>
    </source>
</evidence>
<evidence type="ECO:0000305" key="2"/>
<gene>
    <name evidence="1" type="primary">sigA</name>
    <name type="synonym">rpoD</name>
    <name type="ordered locus">LL0553</name>
    <name type="ORF">L0139</name>
</gene>
<organism>
    <name type="scientific">Lactococcus lactis subsp. lactis (strain IL1403)</name>
    <name type="common">Streptococcus lactis</name>
    <dbReference type="NCBI Taxonomy" id="272623"/>
    <lineage>
        <taxon>Bacteria</taxon>
        <taxon>Bacillati</taxon>
        <taxon>Bacillota</taxon>
        <taxon>Bacilli</taxon>
        <taxon>Lactobacillales</taxon>
        <taxon>Streptococcaceae</taxon>
        <taxon>Lactococcus</taxon>
    </lineage>
</organism>